<sequence>MLTLTAGKKAAMDRLSTQEGIISALAIDQRGALKKMIKALDVEPTDAQIETFKELVSKELTPYASAILLDPEYGLPAAKARDTEAGLLLAYEKTGYDATTPGRLPDLLADWSVLRLKEEGADAIKFLLYYDVDEDPEINHQKHVFIERLGSECAEEDLPFYLELVSYDAQIADATSLEYAKVKPHKVNEMMKEFSKPQYKVDVLKVEVPVNMNFVEGFAPAETAYTKEEAANYFLEQSQATDLPFIFLSAGVSTELFQETLRFAKEAGSTFNGVLCGRATWKNGVKPFVEAGETAACDWLKTEGRENIESLNEVIAATASSWHAKVQVNEG</sequence>
<protein>
    <recommendedName>
        <fullName>Tagatose 1,6-diphosphate aldolase 2</fullName>
        <ecNumber>4.1.2.40</ecNumber>
    </recommendedName>
    <alternativeName>
        <fullName>D-tagatose-1,6-bisphosphate aldolase 2</fullName>
    </alternativeName>
    <alternativeName>
        <fullName>Tagatose-bisphosphate aldolase 2</fullName>
    </alternativeName>
</protein>
<dbReference type="EC" id="4.1.2.40"/>
<dbReference type="EMBL" id="AE016830">
    <property type="protein sequence ID" value="AAO81575.1"/>
    <property type="molecule type" value="Genomic_DNA"/>
</dbReference>
<dbReference type="RefSeq" id="NP_815505.1">
    <property type="nucleotide sequence ID" value="NC_004668.1"/>
</dbReference>
<dbReference type="SMR" id="Q833W8"/>
<dbReference type="STRING" id="226185.EF_1807"/>
<dbReference type="EnsemblBacteria" id="AAO81575">
    <property type="protein sequence ID" value="AAO81575"/>
    <property type="gene ID" value="EF_1807"/>
</dbReference>
<dbReference type="KEGG" id="efa:EF1807"/>
<dbReference type="PATRIC" id="fig|226185.45.peg.1711"/>
<dbReference type="eggNOG" id="COG3684">
    <property type="taxonomic scope" value="Bacteria"/>
</dbReference>
<dbReference type="HOGENOM" id="CLU_058971_0_1_9"/>
<dbReference type="UniPathway" id="UPA00704">
    <property type="reaction ID" value="UER00716"/>
</dbReference>
<dbReference type="Proteomes" id="UP000001415">
    <property type="component" value="Chromosome"/>
</dbReference>
<dbReference type="GO" id="GO:0061595">
    <property type="term" value="F:6-deoxy-6-sulfofructose-1-phosphate aldolase activity"/>
    <property type="evidence" value="ECO:0007669"/>
    <property type="project" value="TreeGrafter"/>
</dbReference>
<dbReference type="GO" id="GO:0009024">
    <property type="term" value="F:tagatose-6-phosphate kinase activity"/>
    <property type="evidence" value="ECO:0007669"/>
    <property type="project" value="InterPro"/>
</dbReference>
<dbReference type="GO" id="GO:0009025">
    <property type="term" value="F:tagatose-bisphosphate aldolase activity"/>
    <property type="evidence" value="ECO:0007669"/>
    <property type="project" value="UniProtKB-UniRule"/>
</dbReference>
<dbReference type="GO" id="GO:1902777">
    <property type="term" value="P:6-sulfoquinovose(1-) catabolic process"/>
    <property type="evidence" value="ECO:0007669"/>
    <property type="project" value="TreeGrafter"/>
</dbReference>
<dbReference type="GO" id="GO:2001059">
    <property type="term" value="P:D-tagatose 6-phosphate catabolic process"/>
    <property type="evidence" value="ECO:0007669"/>
    <property type="project" value="UniProtKB-UniRule"/>
</dbReference>
<dbReference type="GO" id="GO:0019512">
    <property type="term" value="P:lactose catabolic process via tagatose-6-phosphate"/>
    <property type="evidence" value="ECO:0007669"/>
    <property type="project" value="InterPro"/>
</dbReference>
<dbReference type="FunFam" id="3.20.20.70:FF:000137">
    <property type="entry name" value="Tagatose 1,6-diphosphate aldolase 2"/>
    <property type="match status" value="1"/>
</dbReference>
<dbReference type="Gene3D" id="3.20.20.70">
    <property type="entry name" value="Aldolase class I"/>
    <property type="match status" value="1"/>
</dbReference>
<dbReference type="HAMAP" id="MF_00734">
    <property type="entry name" value="LacD"/>
    <property type="match status" value="1"/>
</dbReference>
<dbReference type="InterPro" id="IPR013785">
    <property type="entry name" value="Aldolase_TIM"/>
</dbReference>
<dbReference type="InterPro" id="IPR002915">
    <property type="entry name" value="DeoC/FbaB/LacD_aldolase"/>
</dbReference>
<dbReference type="InterPro" id="IPR050552">
    <property type="entry name" value="LacD_aldolase"/>
</dbReference>
<dbReference type="InterPro" id="IPR005927">
    <property type="entry name" value="Tag_1.6-dipho_adolase"/>
</dbReference>
<dbReference type="NCBIfam" id="TIGR01232">
    <property type="entry name" value="lacD"/>
    <property type="match status" value="1"/>
</dbReference>
<dbReference type="NCBIfam" id="NF003180">
    <property type="entry name" value="PRK04161.1"/>
    <property type="match status" value="1"/>
</dbReference>
<dbReference type="NCBIfam" id="NF009065">
    <property type="entry name" value="PRK12399.1"/>
    <property type="match status" value="1"/>
</dbReference>
<dbReference type="NCBIfam" id="NF009498">
    <property type="entry name" value="PRK12858.1"/>
    <property type="match status" value="1"/>
</dbReference>
<dbReference type="PANTHER" id="PTHR39340">
    <property type="entry name" value="SULFOFRUCTOSEPHOSPHATE ALDOLASE"/>
    <property type="match status" value="1"/>
</dbReference>
<dbReference type="PANTHER" id="PTHR39340:SF1">
    <property type="entry name" value="SULFOFRUCTOSEPHOSPHATE ALDOLASE"/>
    <property type="match status" value="1"/>
</dbReference>
<dbReference type="Pfam" id="PF01791">
    <property type="entry name" value="DeoC"/>
    <property type="match status" value="1"/>
</dbReference>
<dbReference type="SMART" id="SM01133">
    <property type="entry name" value="DeoC"/>
    <property type="match status" value="1"/>
</dbReference>
<dbReference type="SUPFAM" id="SSF51569">
    <property type="entry name" value="Aldolase"/>
    <property type="match status" value="1"/>
</dbReference>
<gene>
    <name type="primary">lacD2</name>
    <name type="synonym">lacD-2</name>
    <name type="ordered locus">EF_1807</name>
</gene>
<name>LACD2_ENTFA</name>
<feature type="chain" id="PRO_0000203939" description="Tagatose 1,6-diphosphate aldolase 2">
    <location>
        <begin position="1"/>
        <end position="331"/>
    </location>
</feature>
<keyword id="KW-0423">Lactose metabolism</keyword>
<keyword id="KW-0456">Lyase</keyword>
<keyword id="KW-1185">Reference proteome</keyword>
<comment type="catalytic activity">
    <reaction>
        <text>D-tagatofuranose 1,6-bisphosphate = D-glyceraldehyde 3-phosphate + dihydroxyacetone phosphate</text>
        <dbReference type="Rhea" id="RHEA:22948"/>
        <dbReference type="ChEBI" id="CHEBI:57642"/>
        <dbReference type="ChEBI" id="CHEBI:58694"/>
        <dbReference type="ChEBI" id="CHEBI:59776"/>
        <dbReference type="EC" id="4.1.2.40"/>
    </reaction>
</comment>
<comment type="pathway">
    <text>Carbohydrate metabolism; D-tagatose 6-phosphate degradation; D-glyceraldehyde 3-phosphate and glycerone phosphate from D-tagatose 6-phosphate: step 2/2.</text>
</comment>
<comment type="similarity">
    <text evidence="1">Belongs to the aldolase LacD family.</text>
</comment>
<proteinExistence type="inferred from homology"/>
<evidence type="ECO:0000305" key="1"/>
<organism>
    <name type="scientific">Enterococcus faecalis (strain ATCC 700802 / V583)</name>
    <dbReference type="NCBI Taxonomy" id="226185"/>
    <lineage>
        <taxon>Bacteria</taxon>
        <taxon>Bacillati</taxon>
        <taxon>Bacillota</taxon>
        <taxon>Bacilli</taxon>
        <taxon>Lactobacillales</taxon>
        <taxon>Enterococcaceae</taxon>
        <taxon>Enterococcus</taxon>
    </lineage>
</organism>
<reference key="1">
    <citation type="journal article" date="2003" name="Science">
        <title>Role of mobile DNA in the evolution of vancomycin-resistant Enterococcus faecalis.</title>
        <authorList>
            <person name="Paulsen I.T."/>
            <person name="Banerjei L."/>
            <person name="Myers G.S.A."/>
            <person name="Nelson K.E."/>
            <person name="Seshadri R."/>
            <person name="Read T.D."/>
            <person name="Fouts D.E."/>
            <person name="Eisen J.A."/>
            <person name="Gill S.R."/>
            <person name="Heidelberg J.F."/>
            <person name="Tettelin H."/>
            <person name="Dodson R.J."/>
            <person name="Umayam L.A."/>
            <person name="Brinkac L.M."/>
            <person name="Beanan M.J."/>
            <person name="Daugherty S.C."/>
            <person name="DeBoy R.T."/>
            <person name="Durkin S.A."/>
            <person name="Kolonay J.F."/>
            <person name="Madupu R."/>
            <person name="Nelson W.C."/>
            <person name="Vamathevan J.J."/>
            <person name="Tran B."/>
            <person name="Upton J."/>
            <person name="Hansen T."/>
            <person name="Shetty J."/>
            <person name="Khouri H.M."/>
            <person name="Utterback T.R."/>
            <person name="Radune D."/>
            <person name="Ketchum K.A."/>
            <person name="Dougherty B.A."/>
            <person name="Fraser C.M."/>
        </authorList>
    </citation>
    <scope>NUCLEOTIDE SEQUENCE [LARGE SCALE GENOMIC DNA]</scope>
    <source>
        <strain>ATCC 700802 / V583</strain>
    </source>
</reference>
<accession>Q833W8</accession>